<protein>
    <recommendedName>
        <fullName evidence="1">Large ribosomal subunit protein bL32</fullName>
    </recommendedName>
    <alternativeName>
        <fullName evidence="3">50S ribosomal protein L32</fullName>
    </alternativeName>
</protein>
<name>RL32_MYCBT</name>
<sequence length="57" mass="6507">MAVPKRRKSRSNTRSRRSQWKAAKTELVGVTVAGHAHKVPRRLLKAARLGLIDFDKR</sequence>
<keyword id="KW-0687">Ribonucleoprotein</keyword>
<keyword id="KW-0689">Ribosomal protein</keyword>
<organism>
    <name type="scientific">Mycobacterium bovis (strain BCG / Tokyo 172 / ATCC 35737 / TMC 1019)</name>
    <dbReference type="NCBI Taxonomy" id="561275"/>
    <lineage>
        <taxon>Bacteria</taxon>
        <taxon>Bacillati</taxon>
        <taxon>Actinomycetota</taxon>
        <taxon>Actinomycetes</taxon>
        <taxon>Mycobacteriales</taxon>
        <taxon>Mycobacteriaceae</taxon>
        <taxon>Mycobacterium</taxon>
        <taxon>Mycobacterium tuberculosis complex</taxon>
    </lineage>
</organism>
<feature type="chain" id="PRO_1000195985" description="Large ribosomal subunit protein bL32">
    <location>
        <begin position="1"/>
        <end position="57"/>
    </location>
</feature>
<feature type="region of interest" description="Disordered" evidence="2">
    <location>
        <begin position="1"/>
        <end position="22"/>
    </location>
</feature>
<feature type="compositionally biased region" description="Basic residues" evidence="2">
    <location>
        <begin position="1"/>
        <end position="19"/>
    </location>
</feature>
<gene>
    <name evidence="1" type="primary">rpmF</name>
    <name type="ordered locus">JTY_1006</name>
</gene>
<evidence type="ECO:0000255" key="1">
    <source>
        <dbReference type="HAMAP-Rule" id="MF_00340"/>
    </source>
</evidence>
<evidence type="ECO:0000256" key="2">
    <source>
        <dbReference type="SAM" id="MobiDB-lite"/>
    </source>
</evidence>
<evidence type="ECO:0000305" key="3"/>
<accession>C1ALW8</accession>
<proteinExistence type="inferred from homology"/>
<dbReference type="EMBL" id="AP010918">
    <property type="protein sequence ID" value="BAH25297.1"/>
    <property type="molecule type" value="Genomic_DNA"/>
</dbReference>
<dbReference type="RefSeq" id="WP_003405053.1">
    <property type="nucleotide sequence ID" value="NZ_CP014566.1"/>
</dbReference>
<dbReference type="SMR" id="C1ALW8"/>
<dbReference type="GeneID" id="45424948"/>
<dbReference type="KEGG" id="mbt:JTY_1006"/>
<dbReference type="HOGENOM" id="CLU_203263_0_0_11"/>
<dbReference type="GO" id="GO:0015934">
    <property type="term" value="C:large ribosomal subunit"/>
    <property type="evidence" value="ECO:0007669"/>
    <property type="project" value="InterPro"/>
</dbReference>
<dbReference type="GO" id="GO:0003735">
    <property type="term" value="F:structural constituent of ribosome"/>
    <property type="evidence" value="ECO:0007669"/>
    <property type="project" value="InterPro"/>
</dbReference>
<dbReference type="GO" id="GO:0006412">
    <property type="term" value="P:translation"/>
    <property type="evidence" value="ECO:0007669"/>
    <property type="project" value="UniProtKB-UniRule"/>
</dbReference>
<dbReference type="HAMAP" id="MF_00340">
    <property type="entry name" value="Ribosomal_bL32"/>
    <property type="match status" value="1"/>
</dbReference>
<dbReference type="InterPro" id="IPR002677">
    <property type="entry name" value="Ribosomal_bL32"/>
</dbReference>
<dbReference type="InterPro" id="IPR011332">
    <property type="entry name" value="Ribosomal_zn-bd"/>
</dbReference>
<dbReference type="NCBIfam" id="TIGR01031">
    <property type="entry name" value="rpmF_bact"/>
    <property type="match status" value="1"/>
</dbReference>
<dbReference type="Pfam" id="PF01783">
    <property type="entry name" value="Ribosomal_L32p"/>
    <property type="match status" value="1"/>
</dbReference>
<dbReference type="SUPFAM" id="SSF57829">
    <property type="entry name" value="Zn-binding ribosomal proteins"/>
    <property type="match status" value="1"/>
</dbReference>
<reference key="1">
    <citation type="journal article" date="2009" name="Vaccine">
        <title>Whole genome sequence analysis of Mycobacterium bovis bacillus Calmette-Guerin (BCG) Tokyo 172: a comparative study of BCG vaccine substrains.</title>
        <authorList>
            <person name="Seki M."/>
            <person name="Honda I."/>
            <person name="Fujita I."/>
            <person name="Yano I."/>
            <person name="Yamamoto S."/>
            <person name="Koyama A."/>
        </authorList>
    </citation>
    <scope>NUCLEOTIDE SEQUENCE [LARGE SCALE GENOMIC DNA]</scope>
    <source>
        <strain>BCG / Tokyo 172 / ATCC 35737 / TMC 1019</strain>
    </source>
</reference>
<comment type="similarity">
    <text evidence="1">Belongs to the bacterial ribosomal protein bL32 family.</text>
</comment>